<keyword id="KW-0030">Aminoacyl-tRNA synthetase</keyword>
<keyword id="KW-0067">ATP-binding</keyword>
<keyword id="KW-0963">Cytoplasm</keyword>
<keyword id="KW-0436">Ligase</keyword>
<keyword id="KW-0479">Metal-binding</keyword>
<keyword id="KW-0547">Nucleotide-binding</keyword>
<keyword id="KW-0648">Protein biosynthesis</keyword>
<keyword id="KW-1185">Reference proteome</keyword>
<keyword id="KW-0694">RNA-binding</keyword>
<keyword id="KW-0820">tRNA-binding</keyword>
<keyword id="KW-0862">Zinc</keyword>
<dbReference type="EC" id="6.1.1.3" evidence="1"/>
<dbReference type="EMBL" id="CP000555">
    <property type="protein sequence ID" value="ABM94846.1"/>
    <property type="molecule type" value="Genomic_DNA"/>
</dbReference>
<dbReference type="RefSeq" id="WP_011829483.1">
    <property type="nucleotide sequence ID" value="NC_008825.1"/>
</dbReference>
<dbReference type="SMR" id="A2SH07"/>
<dbReference type="STRING" id="420662.Mpe_A1888"/>
<dbReference type="KEGG" id="mpt:Mpe_A1888"/>
<dbReference type="eggNOG" id="COG0441">
    <property type="taxonomic scope" value="Bacteria"/>
</dbReference>
<dbReference type="HOGENOM" id="CLU_008554_0_1_4"/>
<dbReference type="Proteomes" id="UP000000366">
    <property type="component" value="Chromosome"/>
</dbReference>
<dbReference type="GO" id="GO:0005737">
    <property type="term" value="C:cytoplasm"/>
    <property type="evidence" value="ECO:0007669"/>
    <property type="project" value="UniProtKB-SubCell"/>
</dbReference>
<dbReference type="GO" id="GO:0005524">
    <property type="term" value="F:ATP binding"/>
    <property type="evidence" value="ECO:0007669"/>
    <property type="project" value="UniProtKB-UniRule"/>
</dbReference>
<dbReference type="GO" id="GO:0046872">
    <property type="term" value="F:metal ion binding"/>
    <property type="evidence" value="ECO:0007669"/>
    <property type="project" value="UniProtKB-KW"/>
</dbReference>
<dbReference type="GO" id="GO:0004829">
    <property type="term" value="F:threonine-tRNA ligase activity"/>
    <property type="evidence" value="ECO:0007669"/>
    <property type="project" value="UniProtKB-UniRule"/>
</dbReference>
<dbReference type="GO" id="GO:0000049">
    <property type="term" value="F:tRNA binding"/>
    <property type="evidence" value="ECO:0007669"/>
    <property type="project" value="UniProtKB-KW"/>
</dbReference>
<dbReference type="GO" id="GO:0006435">
    <property type="term" value="P:threonyl-tRNA aminoacylation"/>
    <property type="evidence" value="ECO:0007669"/>
    <property type="project" value="UniProtKB-UniRule"/>
</dbReference>
<dbReference type="CDD" id="cd01667">
    <property type="entry name" value="TGS_ThrRS"/>
    <property type="match status" value="1"/>
</dbReference>
<dbReference type="CDD" id="cd00860">
    <property type="entry name" value="ThrRS_anticodon"/>
    <property type="match status" value="1"/>
</dbReference>
<dbReference type="CDD" id="cd00771">
    <property type="entry name" value="ThrRS_core"/>
    <property type="match status" value="1"/>
</dbReference>
<dbReference type="FunFam" id="3.10.20.30:FF:000005">
    <property type="entry name" value="Threonine--tRNA ligase"/>
    <property type="match status" value="1"/>
</dbReference>
<dbReference type="FunFam" id="3.30.54.20:FF:000002">
    <property type="entry name" value="Threonine--tRNA ligase"/>
    <property type="match status" value="1"/>
</dbReference>
<dbReference type="FunFam" id="3.30.930.10:FF:000002">
    <property type="entry name" value="Threonine--tRNA ligase"/>
    <property type="match status" value="1"/>
</dbReference>
<dbReference type="FunFam" id="3.40.50.800:FF:000001">
    <property type="entry name" value="Threonine--tRNA ligase"/>
    <property type="match status" value="1"/>
</dbReference>
<dbReference type="FunFam" id="3.30.980.10:FF:000005">
    <property type="entry name" value="Threonyl-tRNA synthetase, mitochondrial"/>
    <property type="match status" value="1"/>
</dbReference>
<dbReference type="Gene3D" id="3.10.20.30">
    <property type="match status" value="1"/>
</dbReference>
<dbReference type="Gene3D" id="3.30.54.20">
    <property type="match status" value="1"/>
</dbReference>
<dbReference type="Gene3D" id="3.40.50.800">
    <property type="entry name" value="Anticodon-binding domain"/>
    <property type="match status" value="1"/>
</dbReference>
<dbReference type="Gene3D" id="3.30.930.10">
    <property type="entry name" value="Bira Bifunctional Protein, Domain 2"/>
    <property type="match status" value="1"/>
</dbReference>
<dbReference type="Gene3D" id="3.30.980.10">
    <property type="entry name" value="Threonyl-trna Synthetase, Chain A, domain 2"/>
    <property type="match status" value="1"/>
</dbReference>
<dbReference type="HAMAP" id="MF_00184">
    <property type="entry name" value="Thr_tRNA_synth"/>
    <property type="match status" value="1"/>
</dbReference>
<dbReference type="InterPro" id="IPR002314">
    <property type="entry name" value="aa-tRNA-synt_IIb"/>
</dbReference>
<dbReference type="InterPro" id="IPR006195">
    <property type="entry name" value="aa-tRNA-synth_II"/>
</dbReference>
<dbReference type="InterPro" id="IPR045864">
    <property type="entry name" value="aa-tRNA-synth_II/BPL/LPL"/>
</dbReference>
<dbReference type="InterPro" id="IPR004154">
    <property type="entry name" value="Anticodon-bd"/>
</dbReference>
<dbReference type="InterPro" id="IPR036621">
    <property type="entry name" value="Anticodon-bd_dom_sf"/>
</dbReference>
<dbReference type="InterPro" id="IPR012675">
    <property type="entry name" value="Beta-grasp_dom_sf"/>
</dbReference>
<dbReference type="InterPro" id="IPR004095">
    <property type="entry name" value="TGS"/>
</dbReference>
<dbReference type="InterPro" id="IPR012676">
    <property type="entry name" value="TGS-like"/>
</dbReference>
<dbReference type="InterPro" id="IPR002320">
    <property type="entry name" value="Thr-tRNA-ligase_IIa"/>
</dbReference>
<dbReference type="InterPro" id="IPR018163">
    <property type="entry name" value="Thr/Ala-tRNA-synth_IIc_edit"/>
</dbReference>
<dbReference type="InterPro" id="IPR047246">
    <property type="entry name" value="ThrRS_anticodon"/>
</dbReference>
<dbReference type="InterPro" id="IPR033728">
    <property type="entry name" value="ThrRS_core"/>
</dbReference>
<dbReference type="InterPro" id="IPR012947">
    <property type="entry name" value="tRNA_SAD"/>
</dbReference>
<dbReference type="NCBIfam" id="TIGR00418">
    <property type="entry name" value="thrS"/>
    <property type="match status" value="1"/>
</dbReference>
<dbReference type="PANTHER" id="PTHR11451:SF44">
    <property type="entry name" value="THREONINE--TRNA LIGASE, CHLOROPLASTIC_MITOCHONDRIAL 2"/>
    <property type="match status" value="1"/>
</dbReference>
<dbReference type="PANTHER" id="PTHR11451">
    <property type="entry name" value="THREONINE-TRNA LIGASE"/>
    <property type="match status" value="1"/>
</dbReference>
<dbReference type="Pfam" id="PF03129">
    <property type="entry name" value="HGTP_anticodon"/>
    <property type="match status" value="1"/>
</dbReference>
<dbReference type="Pfam" id="PF02824">
    <property type="entry name" value="TGS"/>
    <property type="match status" value="1"/>
</dbReference>
<dbReference type="Pfam" id="PF00587">
    <property type="entry name" value="tRNA-synt_2b"/>
    <property type="match status" value="1"/>
</dbReference>
<dbReference type="Pfam" id="PF07973">
    <property type="entry name" value="tRNA_SAD"/>
    <property type="match status" value="1"/>
</dbReference>
<dbReference type="PRINTS" id="PR01047">
    <property type="entry name" value="TRNASYNTHTHR"/>
</dbReference>
<dbReference type="SMART" id="SM00863">
    <property type="entry name" value="tRNA_SAD"/>
    <property type="match status" value="1"/>
</dbReference>
<dbReference type="SUPFAM" id="SSF52954">
    <property type="entry name" value="Class II aaRS ABD-related"/>
    <property type="match status" value="1"/>
</dbReference>
<dbReference type="SUPFAM" id="SSF55681">
    <property type="entry name" value="Class II aaRS and biotin synthetases"/>
    <property type="match status" value="1"/>
</dbReference>
<dbReference type="SUPFAM" id="SSF81271">
    <property type="entry name" value="TGS-like"/>
    <property type="match status" value="1"/>
</dbReference>
<dbReference type="SUPFAM" id="SSF55186">
    <property type="entry name" value="ThrRS/AlaRS common domain"/>
    <property type="match status" value="1"/>
</dbReference>
<dbReference type="PROSITE" id="PS50862">
    <property type="entry name" value="AA_TRNA_LIGASE_II"/>
    <property type="match status" value="1"/>
</dbReference>
<dbReference type="PROSITE" id="PS51880">
    <property type="entry name" value="TGS"/>
    <property type="match status" value="1"/>
</dbReference>
<protein>
    <recommendedName>
        <fullName evidence="1">Threonine--tRNA ligase</fullName>
        <ecNumber evidence="1">6.1.1.3</ecNumber>
    </recommendedName>
    <alternativeName>
        <fullName evidence="1">Threonyl-tRNA synthetase</fullName>
        <shortName evidence="1">ThrRS</shortName>
    </alternativeName>
</protein>
<evidence type="ECO:0000255" key="1">
    <source>
        <dbReference type="HAMAP-Rule" id="MF_00184"/>
    </source>
</evidence>
<evidence type="ECO:0000255" key="2">
    <source>
        <dbReference type="PROSITE-ProRule" id="PRU01228"/>
    </source>
</evidence>
<proteinExistence type="inferred from homology"/>
<accession>A2SH07</accession>
<reference key="1">
    <citation type="journal article" date="2007" name="J. Bacteriol.">
        <title>Whole-genome analysis of the methyl tert-butyl ether-degrading beta-proteobacterium Methylibium petroleiphilum PM1.</title>
        <authorList>
            <person name="Kane S.R."/>
            <person name="Chakicherla A.Y."/>
            <person name="Chain P.S.G."/>
            <person name="Schmidt R."/>
            <person name="Shin M.W."/>
            <person name="Legler T.C."/>
            <person name="Scow K.M."/>
            <person name="Larimer F.W."/>
            <person name="Lucas S.M."/>
            <person name="Richardson P.M."/>
            <person name="Hristova K.R."/>
        </authorList>
    </citation>
    <scope>NUCLEOTIDE SEQUENCE [LARGE SCALE GENOMIC DNA]</scope>
    <source>
        <strain>ATCC BAA-1232 / LMG 22953 / PM1</strain>
    </source>
</reference>
<sequence length="635" mass="71587">MIVITLPDGSQREFPGPVTVAEVAASIGTGLAKAALGGRVDGKLVDTGHRIEGDARLAIVTDKDADGLDLIRHSTAHLLAYAVKELFPEAQVTIGPVIENGFYYDFSYKRPFTPEDLAAIEAKMTELAKKDEKVERRVLPRDEAVAYFKSIGEDYKAEIIAGIPAGQDVSLYREGRFEDLCRGPHVPSTGKLRHFKLMKVAGAYWRGDHRNEMLQRIYGTAWASKDELQQYLHMLEEAEKRDHRKLGRELDLFHLDEHAPGLVFWHPKGWTVWQQVEQYMRAVYRDNGYLEVKGPQILDQGLWEKTGHWDKYRENMFVTESEKRDYALKPMNCPGHILIYKQGIKSYRDLPLRYGEFGQCHRNEPTGGLHGIMRVRGFTQDDGHIFCTEEHILPECVAYTALLQKVYKDFGFNDIIYKVATRPEKRIGSDAVWDKAEHALMESLRASGCEFVVSPGDGAFYGPKIEYTLKDALGRQWQCGTMQVDFSLPERLDAVYVAESGERLFPVMLHRAIVGSLERFIGILIEQHAGALPAWLAPVQVMVLNITDGQADYAAEIAKTLQKQGVRAGVDLRNEKITYKIREHSMQKLPYILVVGDKEKAAGAVAVRARGNQDLGVMPLDAFSQRMASDIAHKV</sequence>
<comment type="function">
    <text evidence="1">Catalyzes the attachment of threonine to tRNA(Thr) in a two-step reaction: L-threonine is first activated by ATP to form Thr-AMP and then transferred to the acceptor end of tRNA(Thr). Also edits incorrectly charged L-seryl-tRNA(Thr).</text>
</comment>
<comment type="catalytic activity">
    <reaction evidence="1">
        <text>tRNA(Thr) + L-threonine + ATP = L-threonyl-tRNA(Thr) + AMP + diphosphate + H(+)</text>
        <dbReference type="Rhea" id="RHEA:24624"/>
        <dbReference type="Rhea" id="RHEA-COMP:9670"/>
        <dbReference type="Rhea" id="RHEA-COMP:9704"/>
        <dbReference type="ChEBI" id="CHEBI:15378"/>
        <dbReference type="ChEBI" id="CHEBI:30616"/>
        <dbReference type="ChEBI" id="CHEBI:33019"/>
        <dbReference type="ChEBI" id="CHEBI:57926"/>
        <dbReference type="ChEBI" id="CHEBI:78442"/>
        <dbReference type="ChEBI" id="CHEBI:78534"/>
        <dbReference type="ChEBI" id="CHEBI:456215"/>
        <dbReference type="EC" id="6.1.1.3"/>
    </reaction>
</comment>
<comment type="cofactor">
    <cofactor evidence="1">
        <name>Zn(2+)</name>
        <dbReference type="ChEBI" id="CHEBI:29105"/>
    </cofactor>
    <text evidence="1">Binds 1 zinc ion per subunit.</text>
</comment>
<comment type="subunit">
    <text evidence="1">Homodimer.</text>
</comment>
<comment type="subcellular location">
    <subcellularLocation>
        <location evidence="1">Cytoplasm</location>
    </subcellularLocation>
</comment>
<comment type="similarity">
    <text evidence="1">Belongs to the class-II aminoacyl-tRNA synthetase family.</text>
</comment>
<gene>
    <name evidence="1" type="primary">thrS</name>
    <name type="ordered locus">Mpe_A1888</name>
</gene>
<organism>
    <name type="scientific">Methylibium petroleiphilum (strain ATCC BAA-1232 / LMG 22953 / PM1)</name>
    <dbReference type="NCBI Taxonomy" id="420662"/>
    <lineage>
        <taxon>Bacteria</taxon>
        <taxon>Pseudomonadati</taxon>
        <taxon>Pseudomonadota</taxon>
        <taxon>Betaproteobacteria</taxon>
        <taxon>Burkholderiales</taxon>
        <taxon>Sphaerotilaceae</taxon>
        <taxon>Methylibium</taxon>
    </lineage>
</organism>
<name>SYT_METPP</name>
<feature type="chain" id="PRO_1000020433" description="Threonine--tRNA ligase">
    <location>
        <begin position="1"/>
        <end position="635"/>
    </location>
</feature>
<feature type="domain" description="TGS" evidence="2">
    <location>
        <begin position="1"/>
        <end position="61"/>
    </location>
</feature>
<feature type="region of interest" description="Catalytic" evidence="1">
    <location>
        <begin position="242"/>
        <end position="533"/>
    </location>
</feature>
<feature type="binding site" evidence="1">
    <location>
        <position position="333"/>
    </location>
    <ligand>
        <name>Zn(2+)</name>
        <dbReference type="ChEBI" id="CHEBI:29105"/>
    </ligand>
</feature>
<feature type="binding site" evidence="1">
    <location>
        <position position="384"/>
    </location>
    <ligand>
        <name>Zn(2+)</name>
        <dbReference type="ChEBI" id="CHEBI:29105"/>
    </ligand>
</feature>
<feature type="binding site" evidence="1">
    <location>
        <position position="510"/>
    </location>
    <ligand>
        <name>Zn(2+)</name>
        <dbReference type="ChEBI" id="CHEBI:29105"/>
    </ligand>
</feature>